<organism>
    <name type="scientific">Azotobacter vinelandii</name>
    <dbReference type="NCBI Taxonomy" id="354"/>
    <lineage>
        <taxon>Bacteria</taxon>
        <taxon>Pseudomonadati</taxon>
        <taxon>Pseudomonadota</taxon>
        <taxon>Gammaproteobacteria</taxon>
        <taxon>Pseudomonadales</taxon>
        <taxon>Pseudomonadaceae</taxon>
        <taxon>Azotobacter</taxon>
    </lineage>
</organism>
<proteinExistence type="inferred from homology"/>
<comment type="function">
    <text>Involved in the transport of molybdenum into the cell. May have a role in the early intracellular capture or metabolism of molybdenum.</text>
</comment>
<comment type="similarity">
    <text evidence="2">Belongs to the ModE family.</text>
</comment>
<sequence>MTATRFLARMSLDTDVGTALSDTRIRLLEAIEREGSINRAAKVVPLSYKAAWDAIDTMNNLAPEPLVVRVAGGRQGGGTQLTDYGRRIVAMYRALEIEYQSALDRLSERLNEVTGGDIQAFQRLMHSMSMKTSARNQFAGIVTGLRVGGVDYEVRIRLDAENEIAAVITKASAENLELAIGKEVFALVKSSSVMLTTEPSLKLTARNQLWGEVIDIHEGPVNNEVTLALPSGRSVTCVVTADSCKALGLAPGVAACAFFKSSSVILAVYG</sequence>
<evidence type="ECO:0000255" key="1">
    <source>
        <dbReference type="PROSITE-ProRule" id="PRU01213"/>
    </source>
</evidence>
<evidence type="ECO:0000305" key="2"/>
<dbReference type="EMBL" id="X69077">
    <property type="protein sequence ID" value="CAA48819.1"/>
    <property type="molecule type" value="Genomic_DNA"/>
</dbReference>
<dbReference type="PIR" id="S30947">
    <property type="entry name" value="S30947"/>
</dbReference>
<dbReference type="RefSeq" id="WP_012703509.1">
    <property type="nucleotide sequence ID" value="NZ_FPKM01000015.1"/>
</dbReference>
<dbReference type="SMR" id="P37733"/>
<dbReference type="OMA" id="SYKTAWH"/>
<dbReference type="GO" id="GO:0003700">
    <property type="term" value="F:DNA-binding transcription factor activity"/>
    <property type="evidence" value="ECO:0007669"/>
    <property type="project" value="InterPro"/>
</dbReference>
<dbReference type="GO" id="GO:0030151">
    <property type="term" value="F:molybdenum ion binding"/>
    <property type="evidence" value="ECO:0007669"/>
    <property type="project" value="InterPro"/>
</dbReference>
<dbReference type="GO" id="GO:0015689">
    <property type="term" value="P:molybdate ion transport"/>
    <property type="evidence" value="ECO:0007669"/>
    <property type="project" value="InterPro"/>
</dbReference>
<dbReference type="Gene3D" id="2.40.50.100">
    <property type="match status" value="2"/>
</dbReference>
<dbReference type="Gene3D" id="1.10.10.10">
    <property type="entry name" value="Winged helix-like DNA-binding domain superfamily/Winged helix DNA-binding domain"/>
    <property type="match status" value="1"/>
</dbReference>
<dbReference type="InterPro" id="IPR008995">
    <property type="entry name" value="Mo/tungstate-bd_C_term_dom"/>
</dbReference>
<dbReference type="InterPro" id="IPR016462">
    <property type="entry name" value="ModE"/>
</dbReference>
<dbReference type="InterPro" id="IPR003725">
    <property type="entry name" value="ModE-bd_N"/>
</dbReference>
<dbReference type="InterPro" id="IPR051815">
    <property type="entry name" value="Molybdate_resp_trans_reg"/>
</dbReference>
<dbReference type="InterPro" id="IPR004606">
    <property type="entry name" value="Mop_domain"/>
</dbReference>
<dbReference type="InterPro" id="IPR005116">
    <property type="entry name" value="Transp-assoc_OB_typ1"/>
</dbReference>
<dbReference type="InterPro" id="IPR000847">
    <property type="entry name" value="Tscrpt_reg_HTH_LysR"/>
</dbReference>
<dbReference type="InterPro" id="IPR036388">
    <property type="entry name" value="WH-like_DNA-bd_sf"/>
</dbReference>
<dbReference type="InterPro" id="IPR036390">
    <property type="entry name" value="WH_DNA-bd_sf"/>
</dbReference>
<dbReference type="NCBIfam" id="TIGR00637">
    <property type="entry name" value="ModE_repress"/>
    <property type="match status" value="1"/>
</dbReference>
<dbReference type="NCBIfam" id="TIGR00638">
    <property type="entry name" value="Mop"/>
    <property type="match status" value="2"/>
</dbReference>
<dbReference type="PANTHER" id="PTHR30432:SF1">
    <property type="entry name" value="DNA-BINDING TRANSCRIPTIONAL DUAL REGULATOR MODE"/>
    <property type="match status" value="1"/>
</dbReference>
<dbReference type="PANTHER" id="PTHR30432">
    <property type="entry name" value="TRANSCRIPTIONAL REGULATOR MODE"/>
    <property type="match status" value="1"/>
</dbReference>
<dbReference type="Pfam" id="PF00126">
    <property type="entry name" value="HTH_1"/>
    <property type="match status" value="1"/>
</dbReference>
<dbReference type="Pfam" id="PF03459">
    <property type="entry name" value="TOBE"/>
    <property type="match status" value="2"/>
</dbReference>
<dbReference type="PIRSF" id="PIRSF005763">
    <property type="entry name" value="Txn_reg_ModE"/>
    <property type="match status" value="1"/>
</dbReference>
<dbReference type="SUPFAM" id="SSF50331">
    <property type="entry name" value="MOP-like"/>
    <property type="match status" value="2"/>
</dbReference>
<dbReference type="SUPFAM" id="SSF46785">
    <property type="entry name" value="Winged helix' DNA-binding domain"/>
    <property type="match status" value="1"/>
</dbReference>
<dbReference type="PROSITE" id="PS51866">
    <property type="entry name" value="MOP"/>
    <property type="match status" value="2"/>
</dbReference>
<accession>P37733</accession>
<gene>
    <name type="primary">modE</name>
    <name type="synonym">modA</name>
</gene>
<name>MODE_AZOVI</name>
<feature type="chain" id="PRO_0000201130" description="Molybdenum transport protein ModE">
    <location>
        <begin position="1"/>
        <end position="270"/>
    </location>
</feature>
<feature type="domain" description="Mop 1" evidence="1">
    <location>
        <begin position="131"/>
        <end position="197"/>
    </location>
</feature>
<feature type="domain" description="Mop 2" evidence="1">
    <location>
        <begin position="202"/>
        <end position="268"/>
    </location>
</feature>
<keyword id="KW-0500">Molybdenum</keyword>
<keyword id="KW-0677">Repeat</keyword>
<keyword id="KW-0813">Transport</keyword>
<reference key="1">
    <citation type="journal article" date="1993" name="Mol. Microbiol.">
        <title>Characterization of genes involved in molybdenum transport in Azotobacter vinelandii.</title>
        <authorList>
            <person name="Luque F."/>
            <person name="Mitchenall L.A."/>
            <person name="Chapman M."/>
            <person name="Christine R."/>
            <person name="Pau R.N."/>
        </authorList>
    </citation>
    <scope>NUCLEOTIDE SEQUENCE [GENOMIC DNA]</scope>
    <source>
        <strain>DJ35</strain>
    </source>
</reference>
<reference key="2">
    <citation type="journal article" date="1995" name="J. Bacteriol.">
        <title>Mutational analysis of genes of the mod locus involved in molybdenum transport, homeostasis, and processing in Azotobacter vinelandii.</title>
        <authorList>
            <person name="Mouncey N.J."/>
            <person name="Mitchenall L.A."/>
            <person name="Pau R.N."/>
        </authorList>
    </citation>
    <scope>GENE NAME</scope>
</reference>
<protein>
    <recommendedName>
        <fullName>Molybdenum transport protein ModE</fullName>
    </recommendedName>
</protein>